<reference key="1">
    <citation type="journal article" date="1998" name="Biochim. Biophys. Acta">
        <title>Characterisation of the mob locus from Rhodobacter sphaeroides required for molybdenum cofactor biosynthesis.</title>
        <authorList>
            <person name="Palmer T."/>
            <person name="Goodfellow I.P.G."/>
            <person name="Sockett R.E."/>
            <person name="McEwan A.G."/>
            <person name="Boxer D.H."/>
        </authorList>
    </citation>
    <scope>NUCLEOTIDE SEQUENCE [GENOMIC DNA]</scope>
    <source>
        <strain>WS8</strain>
    </source>
</reference>
<keyword id="KW-0963">Cytoplasm</keyword>
<keyword id="KW-0342">GTP-binding</keyword>
<keyword id="KW-0460">Magnesium</keyword>
<keyword id="KW-0479">Metal-binding</keyword>
<keyword id="KW-0501">Molybdenum cofactor biosynthesis</keyword>
<keyword id="KW-0547">Nucleotide-binding</keyword>
<keyword id="KW-0808">Transferase</keyword>
<organism>
    <name type="scientific">Cereibacter sphaeroides</name>
    <name type="common">Rhodobacter sphaeroides</name>
    <dbReference type="NCBI Taxonomy" id="1063"/>
    <lineage>
        <taxon>Bacteria</taxon>
        <taxon>Pseudomonadati</taxon>
        <taxon>Pseudomonadota</taxon>
        <taxon>Alphaproteobacteria</taxon>
        <taxon>Rhodobacterales</taxon>
        <taxon>Paracoccaceae</taxon>
        <taxon>Cereibacter</taxon>
    </lineage>
</organism>
<protein>
    <recommendedName>
        <fullName evidence="1">Molybdenum cofactor guanylyltransferase</fullName>
        <shortName evidence="1">MoCo guanylyltransferase</shortName>
        <ecNumber evidence="1">2.7.7.77</ecNumber>
    </recommendedName>
    <alternativeName>
        <fullName evidence="1">GTP:molybdopterin guanylyltransferase</fullName>
    </alternativeName>
    <alternativeName>
        <fullName evidence="1">Mo-MPT guanylyltransferase</fullName>
    </alternativeName>
    <alternativeName>
        <fullName evidence="1">Molybdopterin guanylyltransferase</fullName>
    </alternativeName>
    <alternativeName>
        <fullName evidence="1">Molybdopterin-guanine dinucleotide synthase</fullName>
        <shortName evidence="1">MGD synthase</shortName>
    </alternativeName>
</protein>
<proteinExistence type="inferred from homology"/>
<dbReference type="EC" id="2.7.7.77" evidence="1"/>
<dbReference type="EMBL" id="Y09560">
    <property type="protein sequence ID" value="CAA70754.1"/>
    <property type="status" value="ALT_INIT"/>
    <property type="molecule type" value="Genomic_DNA"/>
</dbReference>
<dbReference type="SMR" id="P95645"/>
<dbReference type="BRENDA" id="2.7.7.77">
    <property type="organism ID" value="5383"/>
</dbReference>
<dbReference type="GO" id="GO:0005737">
    <property type="term" value="C:cytoplasm"/>
    <property type="evidence" value="ECO:0007669"/>
    <property type="project" value="UniProtKB-SubCell"/>
</dbReference>
<dbReference type="GO" id="GO:0005525">
    <property type="term" value="F:GTP binding"/>
    <property type="evidence" value="ECO:0007669"/>
    <property type="project" value="UniProtKB-UniRule"/>
</dbReference>
<dbReference type="GO" id="GO:0046872">
    <property type="term" value="F:metal ion binding"/>
    <property type="evidence" value="ECO:0007669"/>
    <property type="project" value="UniProtKB-KW"/>
</dbReference>
<dbReference type="GO" id="GO:0061603">
    <property type="term" value="F:molybdenum cofactor guanylyltransferase activity"/>
    <property type="evidence" value="ECO:0007669"/>
    <property type="project" value="UniProtKB-EC"/>
</dbReference>
<dbReference type="GO" id="GO:1902758">
    <property type="term" value="P:bis(molybdopterin guanine dinucleotide)molybdenum biosynthetic process"/>
    <property type="evidence" value="ECO:0007669"/>
    <property type="project" value="TreeGrafter"/>
</dbReference>
<dbReference type="CDD" id="cd02503">
    <property type="entry name" value="MobA"/>
    <property type="match status" value="1"/>
</dbReference>
<dbReference type="Gene3D" id="3.90.550.10">
    <property type="entry name" value="Spore Coat Polysaccharide Biosynthesis Protein SpsA, Chain A"/>
    <property type="match status" value="1"/>
</dbReference>
<dbReference type="HAMAP" id="MF_00316">
    <property type="entry name" value="MobA"/>
    <property type="match status" value="1"/>
</dbReference>
<dbReference type="InterPro" id="IPR025877">
    <property type="entry name" value="MobA-like_NTP_Trfase"/>
</dbReference>
<dbReference type="InterPro" id="IPR013482">
    <property type="entry name" value="Molybde_CF_guanTrfase"/>
</dbReference>
<dbReference type="InterPro" id="IPR029044">
    <property type="entry name" value="Nucleotide-diphossugar_trans"/>
</dbReference>
<dbReference type="NCBIfam" id="TIGR02665">
    <property type="entry name" value="molyb_mobA"/>
    <property type="match status" value="1"/>
</dbReference>
<dbReference type="PANTHER" id="PTHR19136">
    <property type="entry name" value="MOLYBDENUM COFACTOR GUANYLYLTRANSFERASE"/>
    <property type="match status" value="1"/>
</dbReference>
<dbReference type="PANTHER" id="PTHR19136:SF81">
    <property type="entry name" value="MOLYBDENUM COFACTOR GUANYLYLTRANSFERASE"/>
    <property type="match status" value="1"/>
</dbReference>
<dbReference type="Pfam" id="PF12804">
    <property type="entry name" value="NTP_transf_3"/>
    <property type="match status" value="1"/>
</dbReference>
<dbReference type="SUPFAM" id="SSF53448">
    <property type="entry name" value="Nucleotide-diphospho-sugar transferases"/>
    <property type="match status" value="1"/>
</dbReference>
<comment type="function">
    <text evidence="1">Transfers a GMP moiety from GTP to Mo-molybdopterin (Mo-MPT) cofactor (Moco or molybdenum cofactor) to form Mo-molybdopterin guanine dinucleotide (Mo-MGD) cofactor.</text>
</comment>
<comment type="catalytic activity">
    <reaction evidence="1">
        <text>Mo-molybdopterin + GTP + H(+) = Mo-molybdopterin guanine dinucleotide + diphosphate</text>
        <dbReference type="Rhea" id="RHEA:34243"/>
        <dbReference type="ChEBI" id="CHEBI:15378"/>
        <dbReference type="ChEBI" id="CHEBI:33019"/>
        <dbReference type="ChEBI" id="CHEBI:37565"/>
        <dbReference type="ChEBI" id="CHEBI:71302"/>
        <dbReference type="ChEBI" id="CHEBI:71310"/>
        <dbReference type="EC" id="2.7.7.77"/>
    </reaction>
</comment>
<comment type="cofactor">
    <cofactor evidence="1">
        <name>Mg(2+)</name>
        <dbReference type="ChEBI" id="CHEBI:18420"/>
    </cofactor>
</comment>
<comment type="subunit">
    <text evidence="1">Monomer.</text>
</comment>
<comment type="subcellular location">
    <subcellularLocation>
        <location evidence="1">Cytoplasm</location>
    </subcellularLocation>
</comment>
<comment type="domain">
    <text evidence="1">The N-terminal domain determines nucleotide recognition and specific binding, while the C-terminal domain determines the specific binding to the target protein.</text>
</comment>
<comment type="similarity">
    <text evidence="1">Belongs to the MobA family.</text>
</comment>
<comment type="sequence caution" evidence="2">
    <conflict type="erroneous initiation">
        <sequence resource="EMBL-CDS" id="CAA70754"/>
    </conflict>
</comment>
<sequence length="193" mass="19782">MRLFGLILAGGEGRRMGGTDKASLTLGGRPLVTWVAERLGPQVEELAISANGDPARFAGLGLPVLRDEHPQGPLSGVLAGLRWAAAAGADALVTAPVDTPFVPGDLAPRLWLAGEGACAVAEAGGRVHPACGLWPVAVAEDLAAWLAAGEARVMGFAARHGAARAGFPDENAFLNLNAPEDLARAESLLRKDA</sequence>
<feature type="chain" id="PRO_0000134907" description="Molybdenum cofactor guanylyltransferase">
    <location>
        <begin position="1"/>
        <end position="193"/>
    </location>
</feature>
<feature type="binding site" evidence="1">
    <location>
        <begin position="8"/>
        <end position="10"/>
    </location>
    <ligand>
        <name>GTP</name>
        <dbReference type="ChEBI" id="CHEBI:37565"/>
    </ligand>
</feature>
<feature type="binding site" evidence="1">
    <location>
        <position position="21"/>
    </location>
    <ligand>
        <name>GTP</name>
        <dbReference type="ChEBI" id="CHEBI:37565"/>
    </ligand>
</feature>
<feature type="binding site" evidence="1">
    <location>
        <position position="67"/>
    </location>
    <ligand>
        <name>GTP</name>
        <dbReference type="ChEBI" id="CHEBI:37565"/>
    </ligand>
</feature>
<feature type="binding site" evidence="1">
    <location>
        <position position="98"/>
    </location>
    <ligand>
        <name>GTP</name>
        <dbReference type="ChEBI" id="CHEBI:37565"/>
    </ligand>
</feature>
<feature type="binding site" evidence="1">
    <location>
        <position position="98"/>
    </location>
    <ligand>
        <name>Mg(2+)</name>
        <dbReference type="ChEBI" id="CHEBI:18420"/>
    </ligand>
</feature>
<accession>P95645</accession>
<gene>
    <name evidence="1" type="primary">mobA</name>
    <name type="synonym">mob</name>
</gene>
<evidence type="ECO:0000255" key="1">
    <source>
        <dbReference type="HAMAP-Rule" id="MF_00316"/>
    </source>
</evidence>
<evidence type="ECO:0000305" key="2"/>
<name>MOBA_CERSP</name>